<protein>
    <recommendedName>
        <fullName>WD repeat and FYVE domain-containing protein 2</fullName>
    </recommendedName>
</protein>
<organism>
    <name type="scientific">Caenorhabditis elegans</name>
    <dbReference type="NCBI Taxonomy" id="6239"/>
    <lineage>
        <taxon>Eukaryota</taxon>
        <taxon>Metazoa</taxon>
        <taxon>Ecdysozoa</taxon>
        <taxon>Nematoda</taxon>
        <taxon>Chromadorea</taxon>
        <taxon>Rhabditida</taxon>
        <taxon>Rhabditina</taxon>
        <taxon>Rhabditomorpha</taxon>
        <taxon>Rhabditoidea</taxon>
        <taxon>Rhabditidae</taxon>
        <taxon>Peloderinae</taxon>
        <taxon>Caenorhabditis</taxon>
    </lineage>
</organism>
<dbReference type="EMBL" id="Z47808">
    <property type="protein sequence ID" value="CAA87770.1"/>
    <property type="molecule type" value="Genomic_DNA"/>
</dbReference>
<dbReference type="PIR" id="T20335">
    <property type="entry name" value="T20335"/>
</dbReference>
<dbReference type="RefSeq" id="NP_495983.1">
    <property type="nucleotide sequence ID" value="NM_063582.4"/>
</dbReference>
<dbReference type="SMR" id="Q18964"/>
<dbReference type="BioGRID" id="39799">
    <property type="interactions" value="21"/>
</dbReference>
<dbReference type="DIP" id="DIP-26372N"/>
<dbReference type="FunCoup" id="Q18964">
    <property type="interactions" value="2887"/>
</dbReference>
<dbReference type="IntAct" id="Q18964">
    <property type="interactions" value="12"/>
</dbReference>
<dbReference type="STRING" id="6239.D2013.2.2"/>
<dbReference type="PaxDb" id="6239-D2013.2.1"/>
<dbReference type="PeptideAtlas" id="Q18964"/>
<dbReference type="EnsemblMetazoa" id="D2013.2.1">
    <property type="protein sequence ID" value="D2013.2.1"/>
    <property type="gene ID" value="WBGene00008402"/>
</dbReference>
<dbReference type="GeneID" id="174475"/>
<dbReference type="KEGG" id="cel:CELE_D2013.2"/>
<dbReference type="AGR" id="WB:WBGene00008402"/>
<dbReference type="CTD" id="174475"/>
<dbReference type="WormBase" id="D2013.2">
    <property type="protein sequence ID" value="CE00928"/>
    <property type="gene ID" value="WBGene00008402"/>
    <property type="gene designation" value="wdfy-2"/>
</dbReference>
<dbReference type="eggNOG" id="KOG1409">
    <property type="taxonomic scope" value="Eukaryota"/>
</dbReference>
<dbReference type="GeneTree" id="ENSGT00940000169431"/>
<dbReference type="HOGENOM" id="CLU_046919_0_0_1"/>
<dbReference type="InParanoid" id="Q18964"/>
<dbReference type="OMA" id="EIRCLRW"/>
<dbReference type="OrthoDB" id="63070at2759"/>
<dbReference type="PhylomeDB" id="Q18964"/>
<dbReference type="PRO" id="PR:Q18964"/>
<dbReference type="Proteomes" id="UP000001940">
    <property type="component" value="Chromosome II"/>
</dbReference>
<dbReference type="Bgee" id="WBGene00008402">
    <property type="expression patterns" value="Expressed in embryo and 4 other cell types or tissues"/>
</dbReference>
<dbReference type="GO" id="GO:0005769">
    <property type="term" value="C:early endosome"/>
    <property type="evidence" value="ECO:0000318"/>
    <property type="project" value="GO_Central"/>
</dbReference>
<dbReference type="GO" id="GO:0032266">
    <property type="term" value="F:phosphatidylinositol-3-phosphate binding"/>
    <property type="evidence" value="ECO:0000250"/>
    <property type="project" value="WormBase"/>
</dbReference>
<dbReference type="GO" id="GO:0008270">
    <property type="term" value="F:zinc ion binding"/>
    <property type="evidence" value="ECO:0007669"/>
    <property type="project" value="UniProtKB-KW"/>
</dbReference>
<dbReference type="GO" id="GO:0006897">
    <property type="term" value="P:endocytosis"/>
    <property type="evidence" value="ECO:0000315"/>
    <property type="project" value="WormBase"/>
</dbReference>
<dbReference type="CDD" id="cd15718">
    <property type="entry name" value="FYVE_WDFY1_like"/>
    <property type="match status" value="1"/>
</dbReference>
<dbReference type="FunFam" id="2.130.10.10:FF:002135">
    <property type="entry name" value="WD repeat and FYVE domain-containing protein 2"/>
    <property type="match status" value="1"/>
</dbReference>
<dbReference type="FunFam" id="3.30.40.10:FF:000105">
    <property type="entry name" value="WD repeat and FYVE domain-containing protein 2"/>
    <property type="match status" value="1"/>
</dbReference>
<dbReference type="Gene3D" id="2.130.10.10">
    <property type="entry name" value="YVTN repeat-like/Quinoprotein amine dehydrogenase"/>
    <property type="match status" value="2"/>
</dbReference>
<dbReference type="Gene3D" id="3.30.40.10">
    <property type="entry name" value="Zinc/RING finger domain, C3HC4 (zinc finger)"/>
    <property type="match status" value="1"/>
</dbReference>
<dbReference type="InterPro" id="IPR015943">
    <property type="entry name" value="WD40/YVTN_repeat-like_dom_sf"/>
</dbReference>
<dbReference type="InterPro" id="IPR019775">
    <property type="entry name" value="WD40_repeat_CS"/>
</dbReference>
<dbReference type="InterPro" id="IPR036322">
    <property type="entry name" value="WD40_repeat_dom_sf"/>
</dbReference>
<dbReference type="InterPro" id="IPR001680">
    <property type="entry name" value="WD40_rpt"/>
</dbReference>
<dbReference type="InterPro" id="IPR042234">
    <property type="entry name" value="WDFY1/WDFY2"/>
</dbReference>
<dbReference type="InterPro" id="IPR000306">
    <property type="entry name" value="Znf_FYVE"/>
</dbReference>
<dbReference type="InterPro" id="IPR017455">
    <property type="entry name" value="Znf_FYVE-rel"/>
</dbReference>
<dbReference type="InterPro" id="IPR011011">
    <property type="entry name" value="Znf_FYVE_PHD"/>
</dbReference>
<dbReference type="InterPro" id="IPR013083">
    <property type="entry name" value="Znf_RING/FYVE/PHD"/>
</dbReference>
<dbReference type="PANTHER" id="PTHR46189">
    <property type="entry name" value="LD41958P"/>
    <property type="match status" value="1"/>
</dbReference>
<dbReference type="PANTHER" id="PTHR46189:SF1">
    <property type="entry name" value="LD41958P"/>
    <property type="match status" value="1"/>
</dbReference>
<dbReference type="Pfam" id="PF01363">
    <property type="entry name" value="FYVE"/>
    <property type="match status" value="1"/>
</dbReference>
<dbReference type="Pfam" id="PF00400">
    <property type="entry name" value="WD40"/>
    <property type="match status" value="3"/>
</dbReference>
<dbReference type="SMART" id="SM00064">
    <property type="entry name" value="FYVE"/>
    <property type="match status" value="1"/>
</dbReference>
<dbReference type="SMART" id="SM00320">
    <property type="entry name" value="WD40"/>
    <property type="match status" value="5"/>
</dbReference>
<dbReference type="SUPFAM" id="SSF57903">
    <property type="entry name" value="FYVE/PHD zinc finger"/>
    <property type="match status" value="1"/>
</dbReference>
<dbReference type="SUPFAM" id="SSF50978">
    <property type="entry name" value="WD40 repeat-like"/>
    <property type="match status" value="1"/>
</dbReference>
<dbReference type="PROSITE" id="PS00678">
    <property type="entry name" value="WD_REPEATS_1"/>
    <property type="match status" value="2"/>
</dbReference>
<dbReference type="PROSITE" id="PS50082">
    <property type="entry name" value="WD_REPEATS_2"/>
    <property type="match status" value="2"/>
</dbReference>
<dbReference type="PROSITE" id="PS50294">
    <property type="entry name" value="WD_REPEATS_REGION"/>
    <property type="match status" value="1"/>
</dbReference>
<dbReference type="PROSITE" id="PS50178">
    <property type="entry name" value="ZF_FYVE"/>
    <property type="match status" value="1"/>
</dbReference>
<reference key="1">
    <citation type="journal article" date="1998" name="Science">
        <title>Genome sequence of the nematode C. elegans: a platform for investigating biology.</title>
        <authorList>
            <consortium name="The C. elegans sequencing consortium"/>
        </authorList>
    </citation>
    <scope>NUCLEOTIDE SEQUENCE [LARGE SCALE GENOMIC DNA]</scope>
    <source>
        <strain>Bristol N2</strain>
    </source>
</reference>
<reference key="2">
    <citation type="journal article" date="2006" name="Proc. Natl. Acad. Sci. U.S.A.">
        <title>The WD40 and FYVE domain containing protein 2 defines a class of early endosomes necessary for endocytosis.</title>
        <authorList>
            <person name="Hayakawa A."/>
            <person name="Leonard D."/>
            <person name="Murphy S."/>
            <person name="Hayes S."/>
            <person name="Soto M."/>
            <person name="Fogarty K."/>
            <person name="Standley C."/>
            <person name="Bellve K."/>
            <person name="Lambright D."/>
            <person name="Mello C."/>
            <person name="Corvera S."/>
        </authorList>
    </citation>
    <scope>FUNCTION</scope>
    <scope>DISRUPTION PHENOTYPE</scope>
</reference>
<name>WDFY2_CAEEL</name>
<comment type="function">
    <text evidence="2">Plays a role in coelomocyte endocytosis.</text>
</comment>
<comment type="interaction">
    <interactant intactId="EBI-314363">
        <id>Q18964</id>
    </interactant>
    <interactant intactId="EBI-318589">
        <id>P34296</id>
        <label>C06E1.1</label>
    </interactant>
    <organismsDiffer>false</organismsDiffer>
    <experiments>3</experiments>
</comment>
<comment type="interaction">
    <interactant intactId="EBI-314363">
        <id>Q18964</id>
    </interactant>
    <interactant intactId="EBI-318599">
        <id>H2KZJ7</id>
        <label>praf-3</label>
    </interactant>
    <organismsDiffer>false</organismsDiffer>
    <experiments>3</experiments>
</comment>
<comment type="disruption phenotype">
    <text evidence="2">Worms exhibit disruption of coelomocyte endocytosis.</text>
</comment>
<keyword id="KW-0254">Endocytosis</keyword>
<keyword id="KW-0479">Metal-binding</keyword>
<keyword id="KW-1185">Reference proteome</keyword>
<keyword id="KW-0677">Repeat</keyword>
<keyword id="KW-0853">WD repeat</keyword>
<keyword id="KW-0862">Zinc</keyword>
<keyword id="KW-0863">Zinc-finger</keyword>
<proteinExistence type="evidence at protein level"/>
<gene>
    <name type="primary">wdfy-2</name>
    <name type="ORF">D2013.2</name>
</gene>
<sequence>MAAIINQRVEQGESSMGGAKPALLHRITGHVARINDVILLSKDEGVWTASDDRSVRLYLKRDNDQFWPSIHHFMPVAPTSLYYSEETYKLLVGLINGNVYEFSVADDFNSMTESRKWTCHAGPISGLGFALSSELIFSCSRDKSIVWHCSENSNKMGSYLLENSCTAMVIDLPFVFVGDHGGHVTVLRIVDNQPNLVSKLSAHTNAITSLTWDGNKKVLYSGSSDHLIIMWDIGGGRGEAYELNGHNGKVTTLCAAPAAKRLFSADEHGKLMCWDMNCKRVETPEWKTSDCCQKCNQPFFWNLQAMWQRKVVGLRQHHCRTCGSAVCGSCCDNWTTYPPMGYETKIRICNDCNARMKDNPQNFNLTPLAIPHEIHTGITAMHLQETLGLLVTSGQNRVIMIWDVRSVCSAPSGSQ</sequence>
<feature type="chain" id="PRO_0000051504" description="WD repeat and FYVE domain-containing protein 2">
    <location>
        <begin position="1"/>
        <end position="415"/>
    </location>
</feature>
<feature type="repeat" description="WD 1">
    <location>
        <begin position="71"/>
        <end position="103"/>
    </location>
</feature>
<feature type="repeat" description="WD 2">
    <location>
        <begin position="119"/>
        <end position="148"/>
    </location>
</feature>
<feature type="repeat" description="WD 3">
    <location>
        <begin position="202"/>
        <end position="232"/>
    </location>
</feature>
<feature type="repeat" description="WD 4">
    <location>
        <begin position="245"/>
        <end position="284"/>
    </location>
</feature>
<feature type="repeat" description="WD 5">
    <location>
        <begin position="373"/>
        <end position="403"/>
    </location>
</feature>
<feature type="zinc finger region" description="FYVE-type" evidence="1">
    <location>
        <begin position="286"/>
        <end position="357"/>
    </location>
</feature>
<feature type="binding site" evidence="1">
    <location>
        <position position="292"/>
    </location>
    <ligand>
        <name>Zn(2+)</name>
        <dbReference type="ChEBI" id="CHEBI:29105"/>
        <label>1</label>
    </ligand>
</feature>
<feature type="binding site" evidence="1">
    <location>
        <position position="295"/>
    </location>
    <ligand>
        <name>Zn(2+)</name>
        <dbReference type="ChEBI" id="CHEBI:29105"/>
        <label>1</label>
    </ligand>
</feature>
<feature type="binding site" evidence="1">
    <location>
        <position position="319"/>
    </location>
    <ligand>
        <name>Zn(2+)</name>
        <dbReference type="ChEBI" id="CHEBI:29105"/>
        <label>2</label>
    </ligand>
</feature>
<feature type="binding site" evidence="1">
    <location>
        <position position="322"/>
    </location>
    <ligand>
        <name>Zn(2+)</name>
        <dbReference type="ChEBI" id="CHEBI:29105"/>
        <label>2</label>
    </ligand>
</feature>
<feature type="binding site" evidence="1">
    <location>
        <position position="327"/>
    </location>
    <ligand>
        <name>Zn(2+)</name>
        <dbReference type="ChEBI" id="CHEBI:29105"/>
        <label>1</label>
    </ligand>
</feature>
<feature type="binding site" evidence="1">
    <location>
        <position position="330"/>
    </location>
    <ligand>
        <name>Zn(2+)</name>
        <dbReference type="ChEBI" id="CHEBI:29105"/>
        <label>1</label>
    </ligand>
</feature>
<feature type="binding site" evidence="1">
    <location>
        <position position="349"/>
    </location>
    <ligand>
        <name>Zn(2+)</name>
        <dbReference type="ChEBI" id="CHEBI:29105"/>
        <label>2</label>
    </ligand>
</feature>
<feature type="binding site" evidence="1">
    <location>
        <position position="352"/>
    </location>
    <ligand>
        <name>Zn(2+)</name>
        <dbReference type="ChEBI" id="CHEBI:29105"/>
        <label>2</label>
    </ligand>
</feature>
<accession>Q18964</accession>
<evidence type="ECO:0000255" key="1">
    <source>
        <dbReference type="PROSITE-ProRule" id="PRU00091"/>
    </source>
</evidence>
<evidence type="ECO:0000269" key="2">
    <source>
    </source>
</evidence>